<organism>
    <name type="scientific">Burkholderia mallei (strain NCTC 10247)</name>
    <dbReference type="NCBI Taxonomy" id="320389"/>
    <lineage>
        <taxon>Bacteria</taxon>
        <taxon>Pseudomonadati</taxon>
        <taxon>Pseudomonadota</taxon>
        <taxon>Betaproteobacteria</taxon>
        <taxon>Burkholderiales</taxon>
        <taxon>Burkholderiaceae</taxon>
        <taxon>Burkholderia</taxon>
        <taxon>pseudomallei group</taxon>
    </lineage>
</organism>
<feature type="chain" id="PRO_0000374180" description="tRNA-2-methylthio-N(6)-dimethylallyladenosine synthase">
    <location>
        <begin position="1"/>
        <end position="457"/>
    </location>
</feature>
<feature type="domain" description="MTTase N-terminal" evidence="1">
    <location>
        <begin position="3"/>
        <end position="120"/>
    </location>
</feature>
<feature type="domain" description="Radical SAM core" evidence="2">
    <location>
        <begin position="143"/>
        <end position="377"/>
    </location>
</feature>
<feature type="domain" description="TRAM" evidence="1">
    <location>
        <begin position="380"/>
        <end position="447"/>
    </location>
</feature>
<feature type="binding site" evidence="1">
    <location>
        <position position="12"/>
    </location>
    <ligand>
        <name>[4Fe-4S] cluster</name>
        <dbReference type="ChEBI" id="CHEBI:49883"/>
        <label>1</label>
    </ligand>
</feature>
<feature type="binding site" evidence="1">
    <location>
        <position position="49"/>
    </location>
    <ligand>
        <name>[4Fe-4S] cluster</name>
        <dbReference type="ChEBI" id="CHEBI:49883"/>
        <label>1</label>
    </ligand>
</feature>
<feature type="binding site" evidence="1">
    <location>
        <position position="83"/>
    </location>
    <ligand>
        <name>[4Fe-4S] cluster</name>
        <dbReference type="ChEBI" id="CHEBI:49883"/>
        <label>1</label>
    </ligand>
</feature>
<feature type="binding site" evidence="1">
    <location>
        <position position="157"/>
    </location>
    <ligand>
        <name>[4Fe-4S] cluster</name>
        <dbReference type="ChEBI" id="CHEBI:49883"/>
        <label>2</label>
        <note>4Fe-4S-S-AdoMet</note>
    </ligand>
</feature>
<feature type="binding site" evidence="1">
    <location>
        <position position="161"/>
    </location>
    <ligand>
        <name>[4Fe-4S] cluster</name>
        <dbReference type="ChEBI" id="CHEBI:49883"/>
        <label>2</label>
        <note>4Fe-4S-S-AdoMet</note>
    </ligand>
</feature>
<feature type="binding site" evidence="1">
    <location>
        <position position="164"/>
    </location>
    <ligand>
        <name>[4Fe-4S] cluster</name>
        <dbReference type="ChEBI" id="CHEBI:49883"/>
        <label>2</label>
        <note>4Fe-4S-S-AdoMet</note>
    </ligand>
</feature>
<protein>
    <recommendedName>
        <fullName evidence="1">tRNA-2-methylthio-N(6)-dimethylallyladenosine synthase</fullName>
        <ecNumber evidence="1">2.8.4.3</ecNumber>
    </recommendedName>
    <alternativeName>
        <fullName evidence="1">(Dimethylallyl)adenosine tRNA methylthiotransferase MiaB</fullName>
    </alternativeName>
    <alternativeName>
        <fullName evidence="1">tRNA-i(6)A37 methylthiotransferase</fullName>
    </alternativeName>
</protein>
<gene>
    <name evidence="1" type="primary">miaB</name>
    <name type="ordered locus">BMA10247_2438</name>
</gene>
<reference key="1">
    <citation type="journal article" date="2010" name="Genome Biol. Evol.">
        <title>Continuing evolution of Burkholderia mallei through genome reduction and large-scale rearrangements.</title>
        <authorList>
            <person name="Losada L."/>
            <person name="Ronning C.M."/>
            <person name="DeShazer D."/>
            <person name="Woods D."/>
            <person name="Fedorova N."/>
            <person name="Kim H.S."/>
            <person name="Shabalina S.A."/>
            <person name="Pearson T.R."/>
            <person name="Brinkac L."/>
            <person name="Tan P."/>
            <person name="Nandi T."/>
            <person name="Crabtree J."/>
            <person name="Badger J."/>
            <person name="Beckstrom-Sternberg S."/>
            <person name="Saqib M."/>
            <person name="Schutzer S.E."/>
            <person name="Keim P."/>
            <person name="Nierman W.C."/>
        </authorList>
    </citation>
    <scope>NUCLEOTIDE SEQUENCE [LARGE SCALE GENOMIC DNA]</scope>
    <source>
        <strain>NCTC 10247</strain>
    </source>
</reference>
<dbReference type="EC" id="2.8.4.3" evidence="1"/>
<dbReference type="EMBL" id="CP000548">
    <property type="protein sequence ID" value="ABO04043.1"/>
    <property type="molecule type" value="Genomic_DNA"/>
</dbReference>
<dbReference type="RefSeq" id="WP_004190165.1">
    <property type="nucleotide sequence ID" value="NZ_CP007802.1"/>
</dbReference>
<dbReference type="SMR" id="A3MNX8"/>
<dbReference type="GeneID" id="93059186"/>
<dbReference type="KEGG" id="bmaz:BM44_855"/>
<dbReference type="KEGG" id="bmn:BMA10247_2438"/>
<dbReference type="PATRIC" id="fig|320389.8.peg.952"/>
<dbReference type="GO" id="GO:0005829">
    <property type="term" value="C:cytosol"/>
    <property type="evidence" value="ECO:0007669"/>
    <property type="project" value="TreeGrafter"/>
</dbReference>
<dbReference type="GO" id="GO:0051539">
    <property type="term" value="F:4 iron, 4 sulfur cluster binding"/>
    <property type="evidence" value="ECO:0007669"/>
    <property type="project" value="UniProtKB-UniRule"/>
</dbReference>
<dbReference type="GO" id="GO:0046872">
    <property type="term" value="F:metal ion binding"/>
    <property type="evidence" value="ECO:0007669"/>
    <property type="project" value="UniProtKB-KW"/>
</dbReference>
<dbReference type="GO" id="GO:0035597">
    <property type="term" value="F:N6-isopentenyladenosine methylthiotransferase activity"/>
    <property type="evidence" value="ECO:0007669"/>
    <property type="project" value="TreeGrafter"/>
</dbReference>
<dbReference type="CDD" id="cd01335">
    <property type="entry name" value="Radical_SAM"/>
    <property type="match status" value="1"/>
</dbReference>
<dbReference type="FunFam" id="3.40.50.12160:FF:000001">
    <property type="entry name" value="tRNA-2-methylthio-N(6)-dimethylallyladenosine synthase"/>
    <property type="match status" value="1"/>
</dbReference>
<dbReference type="FunFam" id="3.80.30.20:FF:000001">
    <property type="entry name" value="tRNA-2-methylthio-N(6)-dimethylallyladenosine synthase 2"/>
    <property type="match status" value="1"/>
</dbReference>
<dbReference type="Gene3D" id="3.40.50.12160">
    <property type="entry name" value="Methylthiotransferase, N-terminal domain"/>
    <property type="match status" value="1"/>
</dbReference>
<dbReference type="Gene3D" id="3.80.30.20">
    <property type="entry name" value="tm_1862 like domain"/>
    <property type="match status" value="1"/>
</dbReference>
<dbReference type="HAMAP" id="MF_01864">
    <property type="entry name" value="tRNA_metthiotr_MiaB"/>
    <property type="match status" value="1"/>
</dbReference>
<dbReference type="InterPro" id="IPR006638">
    <property type="entry name" value="Elp3/MiaA/NifB-like_rSAM"/>
</dbReference>
<dbReference type="InterPro" id="IPR005839">
    <property type="entry name" value="Methylthiotransferase"/>
</dbReference>
<dbReference type="InterPro" id="IPR020612">
    <property type="entry name" value="Methylthiotransferase_CS"/>
</dbReference>
<dbReference type="InterPro" id="IPR013848">
    <property type="entry name" value="Methylthiotransferase_N"/>
</dbReference>
<dbReference type="InterPro" id="IPR038135">
    <property type="entry name" value="Methylthiotransferase_N_sf"/>
</dbReference>
<dbReference type="InterPro" id="IPR006463">
    <property type="entry name" value="MiaB_methiolase"/>
</dbReference>
<dbReference type="InterPro" id="IPR007197">
    <property type="entry name" value="rSAM"/>
</dbReference>
<dbReference type="InterPro" id="IPR023404">
    <property type="entry name" value="rSAM_horseshoe"/>
</dbReference>
<dbReference type="InterPro" id="IPR002792">
    <property type="entry name" value="TRAM_dom"/>
</dbReference>
<dbReference type="NCBIfam" id="TIGR01574">
    <property type="entry name" value="miaB-methiolase"/>
    <property type="match status" value="1"/>
</dbReference>
<dbReference type="NCBIfam" id="TIGR00089">
    <property type="entry name" value="MiaB/RimO family radical SAM methylthiotransferase"/>
    <property type="match status" value="1"/>
</dbReference>
<dbReference type="PANTHER" id="PTHR43020">
    <property type="entry name" value="CDK5 REGULATORY SUBUNIT-ASSOCIATED PROTEIN 1"/>
    <property type="match status" value="1"/>
</dbReference>
<dbReference type="PANTHER" id="PTHR43020:SF2">
    <property type="entry name" value="MITOCHONDRIAL TRNA METHYLTHIOTRANSFERASE CDK5RAP1"/>
    <property type="match status" value="1"/>
</dbReference>
<dbReference type="Pfam" id="PF04055">
    <property type="entry name" value="Radical_SAM"/>
    <property type="match status" value="1"/>
</dbReference>
<dbReference type="Pfam" id="PF01938">
    <property type="entry name" value="TRAM"/>
    <property type="match status" value="1"/>
</dbReference>
<dbReference type="Pfam" id="PF00919">
    <property type="entry name" value="UPF0004"/>
    <property type="match status" value="1"/>
</dbReference>
<dbReference type="SFLD" id="SFLDF00273">
    <property type="entry name" value="(dimethylallyl)adenosine_tRNA"/>
    <property type="match status" value="1"/>
</dbReference>
<dbReference type="SFLD" id="SFLDG01082">
    <property type="entry name" value="B12-binding_domain_containing"/>
    <property type="match status" value="1"/>
</dbReference>
<dbReference type="SFLD" id="SFLDS00029">
    <property type="entry name" value="Radical_SAM"/>
    <property type="match status" value="1"/>
</dbReference>
<dbReference type="SMART" id="SM00729">
    <property type="entry name" value="Elp3"/>
    <property type="match status" value="1"/>
</dbReference>
<dbReference type="SUPFAM" id="SSF102114">
    <property type="entry name" value="Radical SAM enzymes"/>
    <property type="match status" value="1"/>
</dbReference>
<dbReference type="PROSITE" id="PS51449">
    <property type="entry name" value="MTTASE_N"/>
    <property type="match status" value="1"/>
</dbReference>
<dbReference type="PROSITE" id="PS01278">
    <property type="entry name" value="MTTASE_RADICAL"/>
    <property type="match status" value="1"/>
</dbReference>
<dbReference type="PROSITE" id="PS51918">
    <property type="entry name" value="RADICAL_SAM"/>
    <property type="match status" value="1"/>
</dbReference>
<dbReference type="PROSITE" id="PS50926">
    <property type="entry name" value="TRAM"/>
    <property type="match status" value="1"/>
</dbReference>
<evidence type="ECO:0000255" key="1">
    <source>
        <dbReference type="HAMAP-Rule" id="MF_01864"/>
    </source>
</evidence>
<evidence type="ECO:0000255" key="2">
    <source>
        <dbReference type="PROSITE-ProRule" id="PRU01266"/>
    </source>
</evidence>
<keyword id="KW-0004">4Fe-4S</keyword>
<keyword id="KW-0963">Cytoplasm</keyword>
<keyword id="KW-0408">Iron</keyword>
<keyword id="KW-0411">Iron-sulfur</keyword>
<keyword id="KW-0479">Metal-binding</keyword>
<keyword id="KW-0949">S-adenosyl-L-methionine</keyword>
<keyword id="KW-0808">Transferase</keyword>
<keyword id="KW-0819">tRNA processing</keyword>
<sequence length="457" mass="50512">MTKKVYVKTFGCQMNEYDSDKMVDVLNAAEGLEKTDTPEDADIILFNTCSVREKAQEKVFSDLGRVRELKEAKPDLLIGVGGCVASQEGASIVARAPYVDLVFGPQTLHRLPQMIDARRESGRAQVDITFPEIEKFDHLPPARVEGPSAFVSIMEGCSKYCSYCVVPYTRGDEVSRPLDDVLTEVAGLADQGVREVTLLGQNVNAYRGAIAAGSAEIADFATLIEYVADIPGIERIRYTTSHPKEFTQRLLDVYAKVPKLVDHLHLPVQHGSDRILMAMKRGYTVLEYKSVIRKLRAIRPNLSLSTDIIVGFPGETDADFDKTMALVHEMSYDTSFSFIYSPRPGTPAANLADDTPRELKLKRLQHLQATIEENVARISQSMLGKVERILVEGPSRKDPNELAGRTENNRVVNFPAPSAAHPRLIGQMIDVKINHAYPHSLRGELVLAHGDASAATH</sequence>
<comment type="function">
    <text evidence="1">Catalyzes the methylthiolation of N6-(dimethylallyl)adenosine (i(6)A), leading to the formation of 2-methylthio-N6-(dimethylallyl)adenosine (ms(2)i(6)A) at position 37 in tRNAs that read codons beginning with uridine.</text>
</comment>
<comment type="catalytic activity">
    <reaction evidence="1">
        <text>N(6)-dimethylallyladenosine(37) in tRNA + (sulfur carrier)-SH + AH2 + 2 S-adenosyl-L-methionine = 2-methylsulfanyl-N(6)-dimethylallyladenosine(37) in tRNA + (sulfur carrier)-H + 5'-deoxyadenosine + L-methionine + A + S-adenosyl-L-homocysteine + 2 H(+)</text>
        <dbReference type="Rhea" id="RHEA:37067"/>
        <dbReference type="Rhea" id="RHEA-COMP:10375"/>
        <dbReference type="Rhea" id="RHEA-COMP:10376"/>
        <dbReference type="Rhea" id="RHEA-COMP:14737"/>
        <dbReference type="Rhea" id="RHEA-COMP:14739"/>
        <dbReference type="ChEBI" id="CHEBI:13193"/>
        <dbReference type="ChEBI" id="CHEBI:15378"/>
        <dbReference type="ChEBI" id="CHEBI:17319"/>
        <dbReference type="ChEBI" id="CHEBI:17499"/>
        <dbReference type="ChEBI" id="CHEBI:29917"/>
        <dbReference type="ChEBI" id="CHEBI:57844"/>
        <dbReference type="ChEBI" id="CHEBI:57856"/>
        <dbReference type="ChEBI" id="CHEBI:59789"/>
        <dbReference type="ChEBI" id="CHEBI:64428"/>
        <dbReference type="ChEBI" id="CHEBI:74415"/>
        <dbReference type="ChEBI" id="CHEBI:74417"/>
        <dbReference type="EC" id="2.8.4.3"/>
    </reaction>
</comment>
<comment type="cofactor">
    <cofactor evidence="1">
        <name>[4Fe-4S] cluster</name>
        <dbReference type="ChEBI" id="CHEBI:49883"/>
    </cofactor>
    <text evidence="1">Binds 2 [4Fe-4S] clusters. One cluster is coordinated with 3 cysteines and an exchangeable S-adenosyl-L-methionine.</text>
</comment>
<comment type="subunit">
    <text evidence="1">Monomer.</text>
</comment>
<comment type="subcellular location">
    <subcellularLocation>
        <location evidence="1">Cytoplasm</location>
    </subcellularLocation>
</comment>
<comment type="similarity">
    <text evidence="1">Belongs to the methylthiotransferase family. MiaB subfamily.</text>
</comment>
<proteinExistence type="inferred from homology"/>
<name>MIAB_BURM7</name>
<accession>A3MNX8</accession>